<accession>P50119</accession>
<feature type="initiator methionine" description="Removed" evidence="1">
    <location>
        <position position="1"/>
    </location>
</feature>
<feature type="chain" id="PRO_0000067383" description="Gastrotropin">
    <location>
        <begin position="2"/>
        <end position="128"/>
    </location>
</feature>
<feature type="modified residue" description="N-acetylalanine" evidence="1">
    <location>
        <position position="2"/>
    </location>
</feature>
<evidence type="ECO:0000250" key="1">
    <source>
        <dbReference type="UniProtKB" id="P10289"/>
    </source>
</evidence>
<evidence type="ECO:0000250" key="2">
    <source>
        <dbReference type="UniProtKB" id="P51161"/>
    </source>
</evidence>
<evidence type="ECO:0000250" key="3">
    <source>
        <dbReference type="UniProtKB" id="P51162"/>
    </source>
</evidence>
<evidence type="ECO:0000269" key="4">
    <source>
    </source>
</evidence>
<evidence type="ECO:0000269" key="5">
    <source>
    </source>
</evidence>
<evidence type="ECO:0000305" key="6"/>
<protein>
    <recommendedName>
        <fullName>Gastrotropin</fullName>
        <shortName>GT</shortName>
    </recommendedName>
    <alternativeName>
        <fullName>Fatty acid-binding protein 6</fullName>
    </alternativeName>
    <alternativeName>
        <fullName>Ileal lipid-binding protein</fullName>
        <shortName>ILBP</shortName>
    </alternativeName>
</protein>
<reference key="1">
    <citation type="journal article" date="1996" name="Eur. J. Biochem.">
        <title>The rabbit ileal lipid-binding protein. Gene cloning and functional expression of the recombinant protein.</title>
        <authorList>
            <person name="Stengelin S."/>
            <person name="Apel S."/>
            <person name="Becker W."/>
            <person name="Maier M."/>
            <person name="Rosenberger J."/>
            <person name="Bewersdorf U."/>
            <person name="Girbig F."/>
            <person name="Weyland C."/>
            <person name="Wess G."/>
            <person name="Kramer W."/>
        </authorList>
    </citation>
    <scope>NUCLEOTIDE SEQUENCE [GENOMIC DNA]</scope>
    <scope>TISSUE SPECIFICITY</scope>
    <scope>SUBCELLULAR LOCATION</scope>
    <source>
        <strain>New Zealand white</strain>
        <tissue>Liver</tissue>
    </source>
</reference>
<reference key="2">
    <citation type="journal article" date="1997" name="Eur. J. Biochem.">
        <title>Topological photoaffinity labeling of the rabbit ileal Na+/bile-salt-cotransport system.</title>
        <authorList>
            <person name="Kramer W."/>
            <person name="Wess G."/>
            <person name="Bewersdorf U."/>
            <person name="Corsiero D."/>
            <person name="Girbig F."/>
            <person name="Weyland C."/>
            <person name="Stengelin S."/>
            <person name="Enhsen A."/>
            <person name="Bock K."/>
            <person name="Kleine H."/>
            <person name="Le Dreau M.A."/>
            <person name="Schaefer H.L."/>
        </authorList>
    </citation>
    <scope>SUBCELLULAR LOCATION</scope>
</reference>
<name>FABP6_RABIT</name>
<sequence length="128" mass="14404">MAFTGKFEMESEKNYDEFMKLLGLPSDVVEKSRNIKIVTEIKQDGQDFTWSHHYSGGQIMTNKFTIGKESEIQTFGGKKFKAVVNMEGGKVVANFPNYQHTSEIKGDKLVEVSSIGGVTYERVSKRLA</sequence>
<comment type="function">
    <text evidence="1 3">Binds to bile acids and is involved in enterohepatic bile acid metabolism. Required for efficient apical to basolateral transport of conjugated bile acids in ileal enterocytes. Stimulates gastric acid and pepsinogen secretion (By similarity).</text>
</comment>
<comment type="subcellular location">
    <subcellularLocation>
        <location evidence="4">Cytoplasm</location>
    </subcellularLocation>
    <subcellularLocation>
        <location>Membrane</location>
        <topology evidence="4">Peripheral membrane protein</topology>
        <orientation evidence="5">Cytoplasmic side</orientation>
    </subcellularLocation>
    <text evidence="4">Associated with ileal brush border membranes.</text>
</comment>
<comment type="tissue specificity">
    <text evidence="4">Expressed in ileum.</text>
</comment>
<comment type="domain">
    <text evidence="1 2">Forms a beta-barrel structure that accommodates hydrophobic ligands in its interior. Can bind at least two ligands per molecule, however, the stoichiometry is debated.</text>
</comment>
<comment type="similarity">
    <text evidence="6">Belongs to the calycin superfamily. Fatty-acid binding protein (FABP) family.</text>
</comment>
<dbReference type="EMBL" id="Z54345">
    <property type="protein sequence ID" value="CAA91158.1"/>
    <property type="molecule type" value="Genomic_DNA"/>
</dbReference>
<dbReference type="RefSeq" id="XP_008253566.1">
    <property type="nucleotide sequence ID" value="XM_008255344.4"/>
</dbReference>
<dbReference type="SMR" id="P50119"/>
<dbReference type="FunCoup" id="P50119">
    <property type="interactions" value="574"/>
</dbReference>
<dbReference type="STRING" id="9986.ENSOCUP00000004716"/>
<dbReference type="PaxDb" id="9986-ENSOCUP00000004716"/>
<dbReference type="Ensembl" id="ENSOCUT00000005434.3">
    <property type="protein sequence ID" value="ENSOCUP00000004716.3"/>
    <property type="gene ID" value="ENSOCUG00000005435.3"/>
</dbReference>
<dbReference type="GeneID" id="100352143"/>
<dbReference type="KEGG" id="ocu:100352143"/>
<dbReference type="CTD" id="2172"/>
<dbReference type="eggNOG" id="KOG4015">
    <property type="taxonomic scope" value="Eukaryota"/>
</dbReference>
<dbReference type="GeneTree" id="ENSGT00940000157139"/>
<dbReference type="InParanoid" id="P50119"/>
<dbReference type="OrthoDB" id="10016075at2759"/>
<dbReference type="Proteomes" id="UP000001811">
    <property type="component" value="Chromosome 3"/>
</dbReference>
<dbReference type="Bgee" id="ENSOCUG00000005435">
    <property type="expression patterns" value="Expressed in blood and 1 other cell type or tissue"/>
</dbReference>
<dbReference type="ExpressionAtlas" id="P50119">
    <property type="expression patterns" value="baseline"/>
</dbReference>
<dbReference type="GO" id="GO:0005737">
    <property type="term" value="C:cytoplasm"/>
    <property type="evidence" value="ECO:0007669"/>
    <property type="project" value="UniProtKB-SubCell"/>
</dbReference>
<dbReference type="GO" id="GO:0016020">
    <property type="term" value="C:membrane"/>
    <property type="evidence" value="ECO:0007669"/>
    <property type="project" value="UniProtKB-SubCell"/>
</dbReference>
<dbReference type="GO" id="GO:0008289">
    <property type="term" value="F:lipid binding"/>
    <property type="evidence" value="ECO:0007669"/>
    <property type="project" value="UniProtKB-KW"/>
</dbReference>
<dbReference type="FunFam" id="2.40.128.20:FF:000006">
    <property type="entry name" value="Fatty acid-binding protein, liver"/>
    <property type="match status" value="1"/>
</dbReference>
<dbReference type="Gene3D" id="2.40.128.20">
    <property type="match status" value="1"/>
</dbReference>
<dbReference type="InterPro" id="IPR012674">
    <property type="entry name" value="Calycin"/>
</dbReference>
<dbReference type="InterPro" id="IPR000463">
    <property type="entry name" value="Fatty_acid-bd"/>
</dbReference>
<dbReference type="InterPro" id="IPR031259">
    <property type="entry name" value="ILBP"/>
</dbReference>
<dbReference type="PANTHER" id="PTHR11955">
    <property type="entry name" value="FATTY ACID BINDING PROTEIN"/>
    <property type="match status" value="1"/>
</dbReference>
<dbReference type="Pfam" id="PF14651">
    <property type="entry name" value="Lipocalin_7"/>
    <property type="match status" value="1"/>
</dbReference>
<dbReference type="PRINTS" id="PR00178">
    <property type="entry name" value="FATTYACIDBP"/>
</dbReference>
<dbReference type="SUPFAM" id="SSF50814">
    <property type="entry name" value="Lipocalins"/>
    <property type="match status" value="1"/>
</dbReference>
<dbReference type="PROSITE" id="PS00214">
    <property type="entry name" value="FABP"/>
    <property type="match status" value="1"/>
</dbReference>
<keyword id="KW-0007">Acetylation</keyword>
<keyword id="KW-0963">Cytoplasm</keyword>
<keyword id="KW-0446">Lipid-binding</keyword>
<keyword id="KW-0472">Membrane</keyword>
<keyword id="KW-1185">Reference proteome</keyword>
<keyword id="KW-0813">Transport</keyword>
<proteinExistence type="evidence at transcript level"/>
<organism>
    <name type="scientific">Oryctolagus cuniculus</name>
    <name type="common">Rabbit</name>
    <dbReference type="NCBI Taxonomy" id="9986"/>
    <lineage>
        <taxon>Eukaryota</taxon>
        <taxon>Metazoa</taxon>
        <taxon>Chordata</taxon>
        <taxon>Craniata</taxon>
        <taxon>Vertebrata</taxon>
        <taxon>Euteleostomi</taxon>
        <taxon>Mammalia</taxon>
        <taxon>Eutheria</taxon>
        <taxon>Euarchontoglires</taxon>
        <taxon>Glires</taxon>
        <taxon>Lagomorpha</taxon>
        <taxon>Leporidae</taxon>
        <taxon>Oryctolagus</taxon>
    </lineage>
</organism>
<gene>
    <name type="primary">FABP6</name>
    <name type="synonym">ILBP</name>
    <name type="synonym">ILLBP</name>
</gene>